<proteinExistence type="inferred from homology"/>
<protein>
    <recommendedName>
        <fullName evidence="1">Xanthine-guanine phosphoribosyltransferase</fullName>
        <shortName evidence="1">XGPRT</shortName>
        <ecNumber evidence="1">2.4.2.-</ecNumber>
        <ecNumber evidence="1">2.4.2.22</ecNumber>
    </recommendedName>
    <alternativeName>
        <fullName evidence="1">Xanthine phosphoribosyltransferase</fullName>
    </alternativeName>
</protein>
<sequence length="154" mass="17449">MSKKFIITWDAMQSYCRELAEKQMPAEQWKGIWAVSRGGLVPGAILARELGIRHVDTICISSYDHDHQRDMTVVKAPEGDGEGFLIVEDLVDSGDTARKLREMYPKAKLIAVCAKPAGVELLDDYVVDIAQDTWIEQPWDMSIQFVEPVNRKQK</sequence>
<name>XGPT_VIBC1</name>
<dbReference type="EC" id="2.4.2.-" evidence="1"/>
<dbReference type="EC" id="2.4.2.22" evidence="1"/>
<dbReference type="EMBL" id="CP000789">
    <property type="protein sequence ID" value="ABU70149.1"/>
    <property type="molecule type" value="Genomic_DNA"/>
</dbReference>
<dbReference type="SMR" id="A7MWU9"/>
<dbReference type="KEGG" id="vha:VIBHAR_01159"/>
<dbReference type="PATRIC" id="fig|338187.25.peg.1469"/>
<dbReference type="UniPathway" id="UPA00602">
    <property type="reaction ID" value="UER00658"/>
</dbReference>
<dbReference type="UniPathway" id="UPA00909">
    <property type="reaction ID" value="UER00887"/>
</dbReference>
<dbReference type="Proteomes" id="UP000008152">
    <property type="component" value="Chromosome I"/>
</dbReference>
<dbReference type="GO" id="GO:0005829">
    <property type="term" value="C:cytosol"/>
    <property type="evidence" value="ECO:0007669"/>
    <property type="project" value="TreeGrafter"/>
</dbReference>
<dbReference type="GO" id="GO:0005886">
    <property type="term" value="C:plasma membrane"/>
    <property type="evidence" value="ECO:0007669"/>
    <property type="project" value="UniProtKB-SubCell"/>
</dbReference>
<dbReference type="GO" id="GO:0052657">
    <property type="term" value="F:guanine phosphoribosyltransferase activity"/>
    <property type="evidence" value="ECO:0007669"/>
    <property type="project" value="RHEA"/>
</dbReference>
<dbReference type="GO" id="GO:0004422">
    <property type="term" value="F:hypoxanthine phosphoribosyltransferase activity"/>
    <property type="evidence" value="ECO:0007669"/>
    <property type="project" value="TreeGrafter"/>
</dbReference>
<dbReference type="GO" id="GO:0000287">
    <property type="term" value="F:magnesium ion binding"/>
    <property type="evidence" value="ECO:0007669"/>
    <property type="project" value="UniProtKB-UniRule"/>
</dbReference>
<dbReference type="GO" id="GO:0000310">
    <property type="term" value="F:xanthine phosphoribosyltransferase activity"/>
    <property type="evidence" value="ECO:0007669"/>
    <property type="project" value="UniProtKB-UniRule"/>
</dbReference>
<dbReference type="GO" id="GO:0032263">
    <property type="term" value="P:GMP salvage"/>
    <property type="evidence" value="ECO:0007669"/>
    <property type="project" value="UniProtKB-UniRule"/>
</dbReference>
<dbReference type="GO" id="GO:0032264">
    <property type="term" value="P:IMP salvage"/>
    <property type="evidence" value="ECO:0007669"/>
    <property type="project" value="TreeGrafter"/>
</dbReference>
<dbReference type="GO" id="GO:0006166">
    <property type="term" value="P:purine ribonucleoside salvage"/>
    <property type="evidence" value="ECO:0007669"/>
    <property type="project" value="UniProtKB-KW"/>
</dbReference>
<dbReference type="GO" id="GO:0032265">
    <property type="term" value="P:XMP salvage"/>
    <property type="evidence" value="ECO:0007669"/>
    <property type="project" value="UniProtKB-UniRule"/>
</dbReference>
<dbReference type="CDD" id="cd06223">
    <property type="entry name" value="PRTases_typeI"/>
    <property type="match status" value="1"/>
</dbReference>
<dbReference type="Gene3D" id="3.40.50.2020">
    <property type="match status" value="1"/>
</dbReference>
<dbReference type="HAMAP" id="MF_01903">
    <property type="entry name" value="XGPRT"/>
    <property type="match status" value="1"/>
</dbReference>
<dbReference type="InterPro" id="IPR000836">
    <property type="entry name" value="PRibTrfase_dom"/>
</dbReference>
<dbReference type="InterPro" id="IPR029057">
    <property type="entry name" value="PRTase-like"/>
</dbReference>
<dbReference type="InterPro" id="IPR023747">
    <property type="entry name" value="Xanthine_Guanine_PRibTrfase"/>
</dbReference>
<dbReference type="NCBIfam" id="NF006613">
    <property type="entry name" value="PRK09177.1"/>
    <property type="match status" value="1"/>
</dbReference>
<dbReference type="NCBIfam" id="NF000014">
    <property type="entry name" value="tet_prtrans_34"/>
    <property type="match status" value="1"/>
</dbReference>
<dbReference type="PANTHER" id="PTHR39563">
    <property type="entry name" value="XANTHINE PHOSPHORIBOSYLTRANSFERASE"/>
    <property type="match status" value="1"/>
</dbReference>
<dbReference type="PANTHER" id="PTHR39563:SF1">
    <property type="entry name" value="XANTHINE-GUANINE PHOSPHORIBOSYLTRANSFERASE"/>
    <property type="match status" value="1"/>
</dbReference>
<dbReference type="Pfam" id="PF00156">
    <property type="entry name" value="Pribosyltran"/>
    <property type="match status" value="1"/>
</dbReference>
<dbReference type="SUPFAM" id="SSF53271">
    <property type="entry name" value="PRTase-like"/>
    <property type="match status" value="1"/>
</dbReference>
<dbReference type="PROSITE" id="PS00103">
    <property type="entry name" value="PUR_PYR_PR_TRANSFER"/>
    <property type="match status" value="1"/>
</dbReference>
<feature type="chain" id="PRO_1000070617" description="Xanthine-guanine phosphoribosyltransferase">
    <location>
        <begin position="1"/>
        <end position="154"/>
    </location>
</feature>
<feature type="binding site" evidence="1">
    <location>
        <begin position="37"/>
        <end position="38"/>
    </location>
    <ligand>
        <name>5-phospho-alpha-D-ribose 1-diphosphate</name>
        <dbReference type="ChEBI" id="CHEBI:58017"/>
    </ligand>
</feature>
<feature type="binding site" evidence="1">
    <location>
        <position position="69"/>
    </location>
    <ligand>
        <name>5-phospho-alpha-D-ribose 1-diphosphate</name>
        <dbReference type="ChEBI" id="CHEBI:58017"/>
    </ligand>
</feature>
<feature type="binding site" evidence="1">
    <location>
        <position position="69"/>
    </location>
    <ligand>
        <name>GMP</name>
        <dbReference type="ChEBI" id="CHEBI:58115"/>
    </ligand>
</feature>
<feature type="binding site" evidence="1">
    <location>
        <begin position="88"/>
        <end position="96"/>
    </location>
    <ligand>
        <name>5-phospho-alpha-D-ribose 1-diphosphate</name>
        <dbReference type="ChEBI" id="CHEBI:58017"/>
    </ligand>
</feature>
<feature type="binding site" evidence="1">
    <location>
        <position position="89"/>
    </location>
    <ligand>
        <name>Mg(2+)</name>
        <dbReference type="ChEBI" id="CHEBI:18420"/>
    </ligand>
</feature>
<feature type="binding site" evidence="1">
    <location>
        <begin position="92"/>
        <end position="96"/>
    </location>
    <ligand>
        <name>GMP</name>
        <dbReference type="ChEBI" id="CHEBI:58115"/>
    </ligand>
</feature>
<feature type="binding site" evidence="1">
    <location>
        <position position="92"/>
    </location>
    <ligand>
        <name>guanine</name>
        <dbReference type="ChEBI" id="CHEBI:16235"/>
    </ligand>
</feature>
<feature type="binding site" evidence="1">
    <location>
        <position position="92"/>
    </location>
    <ligand>
        <name>xanthine</name>
        <dbReference type="ChEBI" id="CHEBI:17712"/>
    </ligand>
</feature>
<feature type="binding site" evidence="1">
    <location>
        <begin position="134"/>
        <end position="135"/>
    </location>
    <ligand>
        <name>GMP</name>
        <dbReference type="ChEBI" id="CHEBI:58115"/>
    </ligand>
</feature>
<feature type="binding site" evidence="1">
    <location>
        <position position="135"/>
    </location>
    <ligand>
        <name>guanine</name>
        <dbReference type="ChEBI" id="CHEBI:16235"/>
    </ligand>
</feature>
<feature type="binding site" evidence="1">
    <location>
        <position position="135"/>
    </location>
    <ligand>
        <name>xanthine</name>
        <dbReference type="ChEBI" id="CHEBI:17712"/>
    </ligand>
</feature>
<evidence type="ECO:0000255" key="1">
    <source>
        <dbReference type="HAMAP-Rule" id="MF_01903"/>
    </source>
</evidence>
<comment type="function">
    <text evidence="1">Purine salvage pathway enzyme that catalyzes the transfer of the ribosyl-5-phosphate group from 5-phospho-alpha-D-ribose 1-diphosphate (PRPP) to the N9 position of the 6-oxopurines guanine and xanthine to form the corresponding ribonucleotides GMP (guanosine 5'-monophosphate) and XMP (xanthosine 5'-monophosphate), with the release of PPi. To a lesser extent, also acts on hypoxanthine.</text>
</comment>
<comment type="catalytic activity">
    <reaction evidence="1">
        <text>GMP + diphosphate = guanine + 5-phospho-alpha-D-ribose 1-diphosphate</text>
        <dbReference type="Rhea" id="RHEA:25424"/>
        <dbReference type="ChEBI" id="CHEBI:16235"/>
        <dbReference type="ChEBI" id="CHEBI:33019"/>
        <dbReference type="ChEBI" id="CHEBI:58017"/>
        <dbReference type="ChEBI" id="CHEBI:58115"/>
    </reaction>
    <physiologicalReaction direction="right-to-left" evidence="1">
        <dbReference type="Rhea" id="RHEA:25426"/>
    </physiologicalReaction>
</comment>
<comment type="catalytic activity">
    <reaction evidence="1">
        <text>XMP + diphosphate = xanthine + 5-phospho-alpha-D-ribose 1-diphosphate</text>
        <dbReference type="Rhea" id="RHEA:10800"/>
        <dbReference type="ChEBI" id="CHEBI:17712"/>
        <dbReference type="ChEBI" id="CHEBI:33019"/>
        <dbReference type="ChEBI" id="CHEBI:57464"/>
        <dbReference type="ChEBI" id="CHEBI:58017"/>
        <dbReference type="EC" id="2.4.2.22"/>
    </reaction>
    <physiologicalReaction direction="right-to-left" evidence="1">
        <dbReference type="Rhea" id="RHEA:10802"/>
    </physiologicalReaction>
</comment>
<comment type="catalytic activity">
    <reaction evidence="1">
        <text>IMP + diphosphate = hypoxanthine + 5-phospho-alpha-D-ribose 1-diphosphate</text>
        <dbReference type="Rhea" id="RHEA:17973"/>
        <dbReference type="ChEBI" id="CHEBI:17368"/>
        <dbReference type="ChEBI" id="CHEBI:33019"/>
        <dbReference type="ChEBI" id="CHEBI:58017"/>
        <dbReference type="ChEBI" id="CHEBI:58053"/>
    </reaction>
    <physiologicalReaction direction="right-to-left" evidence="1">
        <dbReference type="Rhea" id="RHEA:17975"/>
    </physiologicalReaction>
</comment>
<comment type="cofactor">
    <cofactor evidence="1">
        <name>Mg(2+)</name>
        <dbReference type="ChEBI" id="CHEBI:18420"/>
    </cofactor>
</comment>
<comment type="pathway">
    <text evidence="1">Purine metabolism; GMP biosynthesis via salvage pathway; GMP from guanine: step 1/1.</text>
</comment>
<comment type="pathway">
    <text evidence="1">Purine metabolism; XMP biosynthesis via salvage pathway; XMP from xanthine: step 1/1.</text>
</comment>
<comment type="subunit">
    <text evidence="1">Homotetramer.</text>
</comment>
<comment type="subcellular location">
    <subcellularLocation>
        <location evidence="1">Cell inner membrane</location>
        <topology evidence="1">Peripheral membrane protein</topology>
    </subcellularLocation>
</comment>
<comment type="similarity">
    <text evidence="1">Belongs to the purine/pyrimidine phosphoribosyltransferase family. XGPT subfamily.</text>
</comment>
<keyword id="KW-0997">Cell inner membrane</keyword>
<keyword id="KW-1003">Cell membrane</keyword>
<keyword id="KW-0328">Glycosyltransferase</keyword>
<keyword id="KW-0460">Magnesium</keyword>
<keyword id="KW-0472">Membrane</keyword>
<keyword id="KW-0479">Metal-binding</keyword>
<keyword id="KW-0660">Purine salvage</keyword>
<keyword id="KW-0808">Transferase</keyword>
<accession>A7MWU9</accession>
<gene>
    <name evidence="1" type="primary">gpt</name>
    <name type="ordered locus">VIBHAR_01159</name>
</gene>
<reference key="1">
    <citation type="submission" date="2007-08" db="EMBL/GenBank/DDBJ databases">
        <authorList>
            <consortium name="The Vibrio harveyi Genome Sequencing Project"/>
            <person name="Bassler B."/>
            <person name="Clifton S.W."/>
            <person name="Fulton L."/>
            <person name="Delehaunty K."/>
            <person name="Fronick C."/>
            <person name="Harrison M."/>
            <person name="Markivic C."/>
            <person name="Fulton R."/>
            <person name="Tin-Wollam A.-M."/>
            <person name="Shah N."/>
            <person name="Pepin K."/>
            <person name="Nash W."/>
            <person name="Thiruvilangam P."/>
            <person name="Bhonagiri V."/>
            <person name="Waters C."/>
            <person name="Tu K.C."/>
            <person name="Irgon J."/>
            <person name="Wilson R.K."/>
        </authorList>
    </citation>
    <scope>NUCLEOTIDE SEQUENCE [LARGE SCALE GENOMIC DNA]</scope>
    <source>
        <strain>ATCC BAA-1116 / BB120</strain>
    </source>
</reference>
<organism>
    <name type="scientific">Vibrio campbellii (strain ATCC BAA-1116)</name>
    <dbReference type="NCBI Taxonomy" id="2902295"/>
    <lineage>
        <taxon>Bacteria</taxon>
        <taxon>Pseudomonadati</taxon>
        <taxon>Pseudomonadota</taxon>
        <taxon>Gammaproteobacteria</taxon>
        <taxon>Vibrionales</taxon>
        <taxon>Vibrionaceae</taxon>
        <taxon>Vibrio</taxon>
    </lineage>
</organism>